<accession>Q10571</accession>
<accession>A9Z1V9</accession>
<feature type="chain" id="PRO_0000096521" description="Transcriptional activator MN1">
    <location>
        <begin position="1"/>
        <end position="1320"/>
    </location>
</feature>
<feature type="region of interest" description="Disordered" evidence="2">
    <location>
        <begin position="1"/>
        <end position="26"/>
    </location>
</feature>
<feature type="region of interest" description="Disordered" evidence="2">
    <location>
        <begin position="92"/>
        <end position="121"/>
    </location>
</feature>
<feature type="region of interest" description="Disordered" evidence="2">
    <location>
        <begin position="147"/>
        <end position="219"/>
    </location>
</feature>
<feature type="region of interest" description="Disordered" evidence="2">
    <location>
        <begin position="231"/>
        <end position="411"/>
    </location>
</feature>
<feature type="region of interest" description="Disordered" evidence="2">
    <location>
        <begin position="423"/>
        <end position="442"/>
    </location>
</feature>
<feature type="region of interest" description="Disordered" evidence="2">
    <location>
        <begin position="474"/>
        <end position="615"/>
    </location>
</feature>
<feature type="region of interest" description="Disordered" evidence="2">
    <location>
        <begin position="629"/>
        <end position="819"/>
    </location>
</feature>
<feature type="region of interest" description="Disordered" evidence="2">
    <location>
        <begin position="840"/>
        <end position="1150"/>
    </location>
</feature>
<feature type="region of interest" description="Disordered" evidence="2">
    <location>
        <begin position="1247"/>
        <end position="1273"/>
    </location>
</feature>
<feature type="compositionally biased region" description="Basic residues" evidence="2">
    <location>
        <begin position="98"/>
        <end position="113"/>
    </location>
</feature>
<feature type="compositionally biased region" description="Low complexity" evidence="2">
    <location>
        <begin position="202"/>
        <end position="214"/>
    </location>
</feature>
<feature type="compositionally biased region" description="Low complexity" evidence="2">
    <location>
        <begin position="291"/>
        <end position="309"/>
    </location>
</feature>
<feature type="compositionally biased region" description="Pro residues" evidence="2">
    <location>
        <begin position="338"/>
        <end position="366"/>
    </location>
</feature>
<feature type="compositionally biased region" description="Pro residues" evidence="2">
    <location>
        <begin position="498"/>
        <end position="514"/>
    </location>
</feature>
<feature type="compositionally biased region" description="Low complexity" evidence="2">
    <location>
        <begin position="523"/>
        <end position="550"/>
    </location>
</feature>
<feature type="compositionally biased region" description="Low complexity" evidence="2">
    <location>
        <begin position="564"/>
        <end position="578"/>
    </location>
</feature>
<feature type="compositionally biased region" description="Gly residues" evidence="2">
    <location>
        <begin position="582"/>
        <end position="596"/>
    </location>
</feature>
<feature type="compositionally biased region" description="Gly residues" evidence="2">
    <location>
        <begin position="701"/>
        <end position="710"/>
    </location>
</feature>
<feature type="compositionally biased region" description="Low complexity" evidence="2">
    <location>
        <begin position="759"/>
        <end position="768"/>
    </location>
</feature>
<feature type="compositionally biased region" description="Gly residues" evidence="2">
    <location>
        <begin position="769"/>
        <end position="784"/>
    </location>
</feature>
<feature type="compositionally biased region" description="Low complexity" evidence="2">
    <location>
        <begin position="798"/>
        <end position="809"/>
    </location>
</feature>
<feature type="compositionally biased region" description="Low complexity" evidence="2">
    <location>
        <begin position="895"/>
        <end position="905"/>
    </location>
</feature>
<feature type="compositionally biased region" description="Polar residues" evidence="2">
    <location>
        <begin position="914"/>
        <end position="930"/>
    </location>
</feature>
<feature type="compositionally biased region" description="Low complexity" evidence="2">
    <location>
        <begin position="973"/>
        <end position="984"/>
    </location>
</feature>
<feature type="compositionally biased region" description="Polar residues" evidence="2">
    <location>
        <begin position="1048"/>
        <end position="1066"/>
    </location>
</feature>
<feature type="compositionally biased region" description="Gly residues" evidence="2">
    <location>
        <begin position="1118"/>
        <end position="1128"/>
    </location>
</feature>
<feature type="modified residue" description="N-acetylmethionine" evidence="9">
    <location>
        <position position="1"/>
    </location>
</feature>
<feature type="modified residue" description="Phosphoserine" evidence="10">
    <location>
        <position position="950"/>
    </location>
</feature>
<feature type="modified residue" description="Phosphoserine" evidence="10">
    <location>
        <position position="954"/>
    </location>
</feature>
<feature type="modified residue" description="Phosphoserine" evidence="10">
    <location>
        <position position="1007"/>
    </location>
</feature>
<feature type="modified residue" description="Phosphoserine" evidence="10">
    <location>
        <position position="1081"/>
    </location>
</feature>
<feature type="sequence variant" id="VAR_047533" description="In dbSNP:rs45589338.">
    <original>Q</original>
    <variation>H</variation>
    <location>
        <position position="382"/>
    </location>
</feature>
<feature type="sequence variant" id="VAR_083776" description="In CEBALID." evidence="3">
    <location>
        <begin position="472"/>
        <end position="1320"/>
    </location>
</feature>
<feature type="sequence variant" id="VAR_083777" description="In CEBALID." evidence="3">
    <location>
        <begin position="1249"/>
        <end position="1320"/>
    </location>
</feature>
<feature type="sequence variant" id="VAR_083778" description="In CEBALID." evidence="3">
    <location>
        <begin position="1260"/>
        <end position="1320"/>
    </location>
</feature>
<feature type="sequence variant" id="VAR_083779" description="In CEBALID." evidence="3">
    <location>
        <begin position="1273"/>
        <end position="1320"/>
    </location>
</feature>
<feature type="sequence variant" id="VAR_083780" description="In CEBALID; increased protein aggregation; decreased protein degradation via the ubiquitin-proteasome pathway; loss of interaction with RING1; decreased interaction with ZBTB24; no effect on nuclear localization." evidence="4">
    <location>
        <begin position="1279"/>
        <end position="1320"/>
    </location>
</feature>
<feature type="sequence variant" id="VAR_083781" description="In CEBALID; increased protein aggregation; decreased protein degradation via the ubiquitin-proteasome pathway; loss of interaction with RING1; decreased interaction with ZBTB24; no effect on nuclear localization." evidence="3 4">
    <location>
        <begin position="1295"/>
        <end position="1320"/>
    </location>
</feature>
<feature type="sequence variant" id="VAR_083782" description="In CEBALID." evidence="3">
    <location>
        <begin position="1301"/>
        <end position="1320"/>
    </location>
</feature>
<evidence type="ECO:0000250" key="1">
    <source>
        <dbReference type="UniProtKB" id="D3YWE6"/>
    </source>
</evidence>
<evidence type="ECO:0000256" key="2">
    <source>
        <dbReference type="SAM" id="MobiDB-lite"/>
    </source>
</evidence>
<evidence type="ECO:0000269" key="3">
    <source>
    </source>
</evidence>
<evidence type="ECO:0000269" key="4">
    <source>
    </source>
</evidence>
<evidence type="ECO:0000269" key="5">
    <source>
    </source>
</evidence>
<evidence type="ECO:0000269" key="6">
    <source>
    </source>
</evidence>
<evidence type="ECO:0000305" key="7"/>
<evidence type="ECO:0000305" key="8">
    <source>
    </source>
</evidence>
<evidence type="ECO:0007744" key="9">
    <source>
    </source>
</evidence>
<evidence type="ECO:0007744" key="10">
    <source>
    </source>
</evidence>
<proteinExistence type="evidence at protein level"/>
<keyword id="KW-0007">Acetylation</keyword>
<keyword id="KW-0010">Activator</keyword>
<keyword id="KW-0160">Chromosomal rearrangement</keyword>
<keyword id="KW-0217">Developmental protein</keyword>
<keyword id="KW-0225">Disease variant</keyword>
<keyword id="KW-0991">Intellectual disability</keyword>
<keyword id="KW-0539">Nucleus</keyword>
<keyword id="KW-0597">Phosphoprotein</keyword>
<keyword id="KW-1267">Proteomics identification</keyword>
<keyword id="KW-1185">Reference proteome</keyword>
<keyword id="KW-0804">Transcription</keyword>
<keyword id="KW-0805">Transcription regulation</keyword>
<keyword id="KW-0043">Tumor suppressor</keyword>
<organism>
    <name type="scientific">Homo sapiens</name>
    <name type="common">Human</name>
    <dbReference type="NCBI Taxonomy" id="9606"/>
    <lineage>
        <taxon>Eukaryota</taxon>
        <taxon>Metazoa</taxon>
        <taxon>Chordata</taxon>
        <taxon>Craniata</taxon>
        <taxon>Vertebrata</taxon>
        <taxon>Euteleostomi</taxon>
        <taxon>Mammalia</taxon>
        <taxon>Eutheria</taxon>
        <taxon>Euarchontoglires</taxon>
        <taxon>Primates</taxon>
        <taxon>Haplorrhini</taxon>
        <taxon>Catarrhini</taxon>
        <taxon>Hominidae</taxon>
        <taxon>Homo</taxon>
    </lineage>
</organism>
<gene>
    <name type="primary">MN1</name>
</gene>
<protein>
    <recommendedName>
        <fullName evidence="7">Transcriptional activator MN1</fullName>
    </recommendedName>
    <alternativeName>
        <fullName evidence="7">Probable tumor suppressor protein MN1</fullName>
    </alternativeName>
</protein>
<reference key="1">
    <citation type="journal article" date="1995" name="Oncogene">
        <title>Cloning and characterization of MN1, a gene from chromosome 22q11, which is disrupted by a balanced translocation in a meningioma.</title>
        <authorList>
            <person name="Deprez R.H.L."/>
            <person name="Riegman P.H.J."/>
            <person name="Groen N.A."/>
            <person name="Warringa U.L."/>
            <person name="van Biezen N.A."/>
            <person name="Molijn A.C."/>
            <person name="Bootsma D."/>
            <person name="de Jong P.J."/>
            <person name="Menon A.G."/>
            <person name="Kley N.A."/>
            <person name="Seizenger B.R."/>
            <person name="Zwarthoff E.C."/>
        </authorList>
    </citation>
    <scope>NUCLEOTIDE SEQUENCE [MRNA]</scope>
    <scope>FUNCTION</scope>
    <scope>INVOLVEMENT IN MENINGIOMAS</scope>
    <source>
        <tissue>Brain</tissue>
    </source>
</reference>
<reference key="2">
    <citation type="journal article" date="1995" name="Oncogene">
        <title>Translocation (12;22) (p13;q11) in myeloproliferative disorders results in fusion of the ETS-like TEL gene on 12p13 to the MN1 gene on 22q11.</title>
        <authorList>
            <person name="Buijs A."/>
            <person name="Sherr S."/>
            <person name="van Baal S."/>
            <person name="van Bezouw S."/>
            <person name="van der Plas D."/>
            <person name="Geurts van Kessel A."/>
            <person name="Riegman P."/>
            <person name="Lekanne Deprez R."/>
            <person name="Zwarthoff E."/>
            <person name="Hagemeijer A."/>
        </authorList>
    </citation>
    <scope>CHROMOSOMAL TRANSLOCATION WITH ETV6</scope>
</reference>
<reference key="3">
    <citation type="submission" date="2004-08" db="EMBL/GenBank/DDBJ databases">
        <authorList>
            <person name="Riegmann P.H.J."/>
        </authorList>
    </citation>
    <scope>SEQUENCE REVISION</scope>
</reference>
<reference key="4">
    <citation type="journal article" date="1999" name="Nature">
        <title>The DNA sequence of human chromosome 22.</title>
        <authorList>
            <person name="Dunham I."/>
            <person name="Hunt A.R."/>
            <person name="Collins J.E."/>
            <person name="Bruskiewich R."/>
            <person name="Beare D.M."/>
            <person name="Clamp M."/>
            <person name="Smink L.J."/>
            <person name="Ainscough R."/>
            <person name="Almeida J.P."/>
            <person name="Babbage A.K."/>
            <person name="Bagguley C."/>
            <person name="Bailey J."/>
            <person name="Barlow K.F."/>
            <person name="Bates K.N."/>
            <person name="Beasley O.P."/>
            <person name="Bird C.P."/>
            <person name="Blakey S.E."/>
            <person name="Bridgeman A.M."/>
            <person name="Buck D."/>
            <person name="Burgess J."/>
            <person name="Burrill W.D."/>
            <person name="Burton J."/>
            <person name="Carder C."/>
            <person name="Carter N.P."/>
            <person name="Chen Y."/>
            <person name="Clark G."/>
            <person name="Clegg S.M."/>
            <person name="Cobley V.E."/>
            <person name="Cole C.G."/>
            <person name="Collier R.E."/>
            <person name="Connor R."/>
            <person name="Conroy D."/>
            <person name="Corby N.R."/>
            <person name="Coville G.J."/>
            <person name="Cox A.V."/>
            <person name="Davis J."/>
            <person name="Dawson E."/>
            <person name="Dhami P.D."/>
            <person name="Dockree C."/>
            <person name="Dodsworth S.J."/>
            <person name="Durbin R.M."/>
            <person name="Ellington A.G."/>
            <person name="Evans K.L."/>
            <person name="Fey J.M."/>
            <person name="Fleming K."/>
            <person name="French L."/>
            <person name="Garner A.A."/>
            <person name="Gilbert J.G.R."/>
            <person name="Goward M.E."/>
            <person name="Grafham D.V."/>
            <person name="Griffiths M.N.D."/>
            <person name="Hall C."/>
            <person name="Hall R.E."/>
            <person name="Hall-Tamlyn G."/>
            <person name="Heathcott R.W."/>
            <person name="Ho S."/>
            <person name="Holmes S."/>
            <person name="Hunt S.E."/>
            <person name="Jones M.C."/>
            <person name="Kershaw J."/>
            <person name="Kimberley A.M."/>
            <person name="King A."/>
            <person name="Laird G.K."/>
            <person name="Langford C.F."/>
            <person name="Leversha M.A."/>
            <person name="Lloyd C."/>
            <person name="Lloyd D.M."/>
            <person name="Martyn I.D."/>
            <person name="Mashreghi-Mohammadi M."/>
            <person name="Matthews L.H."/>
            <person name="Mccann O.T."/>
            <person name="Mcclay J."/>
            <person name="Mclaren S."/>
            <person name="McMurray A.A."/>
            <person name="Milne S.A."/>
            <person name="Mortimore B.J."/>
            <person name="Odell C.N."/>
            <person name="Pavitt R."/>
            <person name="Pearce A.V."/>
            <person name="Pearson D."/>
            <person name="Phillimore B.J.C.T."/>
            <person name="Phillips S.H."/>
            <person name="Plumb R.W."/>
            <person name="Ramsay H."/>
            <person name="Ramsey Y."/>
            <person name="Rogers L."/>
            <person name="Ross M.T."/>
            <person name="Scott C.E."/>
            <person name="Sehra H.K."/>
            <person name="Skuce C.D."/>
            <person name="Smalley S."/>
            <person name="Smith M.L."/>
            <person name="Soderlund C."/>
            <person name="Spragon L."/>
            <person name="Steward C.A."/>
            <person name="Sulston J.E."/>
            <person name="Swann R.M."/>
            <person name="Vaudin M."/>
            <person name="Wall M."/>
            <person name="Wallis J.M."/>
            <person name="Whiteley M.N."/>
            <person name="Willey D.L."/>
            <person name="Williams L."/>
            <person name="Williams S.A."/>
            <person name="Williamson H."/>
            <person name="Wilmer T.E."/>
            <person name="Wilming L."/>
            <person name="Wright C.L."/>
            <person name="Hubbard T."/>
            <person name="Bentley D.R."/>
            <person name="Beck S."/>
            <person name="Rogers J."/>
            <person name="Shimizu N."/>
            <person name="Minoshima S."/>
            <person name="Kawasaki K."/>
            <person name="Sasaki T."/>
            <person name="Asakawa S."/>
            <person name="Kudoh J."/>
            <person name="Shintani A."/>
            <person name="Shibuya K."/>
            <person name="Yoshizaki Y."/>
            <person name="Aoki N."/>
            <person name="Mitsuyama S."/>
            <person name="Roe B.A."/>
            <person name="Chen F."/>
            <person name="Chu L."/>
            <person name="Crabtree J."/>
            <person name="Deschamps S."/>
            <person name="Do A."/>
            <person name="Do T."/>
            <person name="Dorman A."/>
            <person name="Fang F."/>
            <person name="Fu Y."/>
            <person name="Hu P."/>
            <person name="Hua A."/>
            <person name="Kenton S."/>
            <person name="Lai H."/>
            <person name="Lao H.I."/>
            <person name="Lewis J."/>
            <person name="Lewis S."/>
            <person name="Lin S.-P."/>
            <person name="Loh P."/>
            <person name="Malaj E."/>
            <person name="Nguyen T."/>
            <person name="Pan H."/>
            <person name="Phan S."/>
            <person name="Qi S."/>
            <person name="Qian Y."/>
            <person name="Ray L."/>
            <person name="Ren Q."/>
            <person name="Shaull S."/>
            <person name="Sloan D."/>
            <person name="Song L."/>
            <person name="Wang Q."/>
            <person name="Wang Y."/>
            <person name="Wang Z."/>
            <person name="White J."/>
            <person name="Willingham D."/>
            <person name="Wu H."/>
            <person name="Yao Z."/>
            <person name="Zhan M."/>
            <person name="Zhang G."/>
            <person name="Chissoe S."/>
            <person name="Murray J."/>
            <person name="Miller N."/>
            <person name="Minx P."/>
            <person name="Fulton R."/>
            <person name="Johnson D."/>
            <person name="Bemis G."/>
            <person name="Bentley D."/>
            <person name="Bradshaw H."/>
            <person name="Bourne S."/>
            <person name="Cordes M."/>
            <person name="Du Z."/>
            <person name="Fulton L."/>
            <person name="Goela D."/>
            <person name="Graves T."/>
            <person name="Hawkins J."/>
            <person name="Hinds K."/>
            <person name="Kemp K."/>
            <person name="Latreille P."/>
            <person name="Layman D."/>
            <person name="Ozersky P."/>
            <person name="Rohlfing T."/>
            <person name="Scheet P."/>
            <person name="Walker C."/>
            <person name="Wamsley A."/>
            <person name="Wohldmann P."/>
            <person name="Pepin K."/>
            <person name="Nelson J."/>
            <person name="Korf I."/>
            <person name="Bedell J.A."/>
            <person name="Hillier L.W."/>
            <person name="Mardis E."/>
            <person name="Waterston R."/>
            <person name="Wilson R."/>
            <person name="Emanuel B.S."/>
            <person name="Shaikh T."/>
            <person name="Kurahashi H."/>
            <person name="Saitta S."/>
            <person name="Budarf M.L."/>
            <person name="McDermid H.E."/>
            <person name="Johnson A."/>
            <person name="Wong A.C.C."/>
            <person name="Morrow B.E."/>
            <person name="Edelmann L."/>
            <person name="Kim U.J."/>
            <person name="Shizuya H."/>
            <person name="Simon M.I."/>
            <person name="Dumanski J.P."/>
            <person name="Peyrard M."/>
            <person name="Kedra D."/>
            <person name="Seroussi E."/>
            <person name="Fransson I."/>
            <person name="Tapia I."/>
            <person name="Bruder C.E."/>
            <person name="O'Brien K.P."/>
            <person name="Wilkinson P."/>
            <person name="Bodenteich A."/>
            <person name="Hartman K."/>
            <person name="Hu X."/>
            <person name="Khan A.S."/>
            <person name="Lane L."/>
            <person name="Tilahun Y."/>
            <person name="Wright H."/>
        </authorList>
    </citation>
    <scope>NUCLEOTIDE SEQUENCE [LARGE SCALE GENOMIC DNA]</scope>
</reference>
<reference key="5">
    <citation type="submission" date="2005-07" db="EMBL/GenBank/DDBJ databases">
        <authorList>
            <person name="Mural R.J."/>
            <person name="Istrail S."/>
            <person name="Sutton G.G."/>
            <person name="Florea L."/>
            <person name="Halpern A.L."/>
            <person name="Mobarry C.M."/>
            <person name="Lippert R."/>
            <person name="Walenz B."/>
            <person name="Shatkay H."/>
            <person name="Dew I."/>
            <person name="Miller J.R."/>
            <person name="Flanigan M.J."/>
            <person name="Edwards N.J."/>
            <person name="Bolanos R."/>
            <person name="Fasulo D."/>
            <person name="Halldorsson B.V."/>
            <person name="Hannenhalli S."/>
            <person name="Turner R."/>
            <person name="Yooseph S."/>
            <person name="Lu F."/>
            <person name="Nusskern D.R."/>
            <person name="Shue B.C."/>
            <person name="Zheng X.H."/>
            <person name="Zhong F."/>
            <person name="Delcher A.L."/>
            <person name="Huson D.H."/>
            <person name="Kravitz S.A."/>
            <person name="Mouchard L."/>
            <person name="Reinert K."/>
            <person name="Remington K.A."/>
            <person name="Clark A.G."/>
            <person name="Waterman M.S."/>
            <person name="Eichler E.E."/>
            <person name="Adams M.D."/>
            <person name="Hunkapiller M.W."/>
            <person name="Myers E.W."/>
            <person name="Venter J.C."/>
        </authorList>
    </citation>
    <scope>NUCLEOTIDE SEQUENCE [LARGE SCALE GENOMIC DNA]</scope>
</reference>
<reference key="6">
    <citation type="journal article" date="1996" name="Cyt. Genet.">
        <title>The characteristics of different types of mRNA expressed in the human brain.</title>
        <authorList>
            <person name="Dmitrenko V.V."/>
            <person name="Garifulin O.M."/>
            <person name="Shostak E.A."/>
            <person name="Smikodub A.I."/>
            <person name="Kavsan V.M."/>
        </authorList>
    </citation>
    <scope>NUCLEOTIDE SEQUENCE [MRNA] OF 1305-1320</scope>
    <source>
        <tissue>Brain</tissue>
    </source>
</reference>
<reference key="7">
    <citation type="journal article" date="2012" name="Proc. Natl. Acad. Sci. U.S.A.">
        <title>N-terminal acetylome analyses and functional insights of the N-terminal acetyltransferase NatB.</title>
        <authorList>
            <person name="Van Damme P."/>
            <person name="Lasa M."/>
            <person name="Polevoda B."/>
            <person name="Gazquez C."/>
            <person name="Elosegui-Artola A."/>
            <person name="Kim D.S."/>
            <person name="De Juan-Pardo E."/>
            <person name="Demeyer K."/>
            <person name="Hole K."/>
            <person name="Larrea E."/>
            <person name="Timmerman E."/>
            <person name="Prieto J."/>
            <person name="Arnesen T."/>
            <person name="Sherman F."/>
            <person name="Gevaert K."/>
            <person name="Aldabe R."/>
        </authorList>
    </citation>
    <scope>ACETYLATION [LARGE SCALE ANALYSIS] AT MET-1</scope>
    <scope>IDENTIFICATION BY MASS SPECTROMETRY [LARGE SCALE ANALYSIS]</scope>
</reference>
<reference key="8">
    <citation type="journal article" date="2013" name="J. Proteome Res.">
        <title>Toward a comprehensive characterization of a human cancer cell phosphoproteome.</title>
        <authorList>
            <person name="Zhou H."/>
            <person name="Di Palma S."/>
            <person name="Preisinger C."/>
            <person name="Peng M."/>
            <person name="Polat A.N."/>
            <person name="Heck A.J."/>
            <person name="Mohammed S."/>
        </authorList>
    </citation>
    <scope>PHOSPHORYLATION [LARGE SCALE ANALYSIS] AT SER-950; SER-954; SER-1007 AND SER-1081</scope>
    <scope>IDENTIFICATION BY MASS SPECTROMETRY [LARGE SCALE ANALYSIS]</scope>
    <source>
        <tissue>Cervix carcinoma</tissue>
    </source>
</reference>
<reference key="9">
    <citation type="journal article" date="2020" name="Am. J. Hum. Genet.">
        <title>Gain-of-function MN1 truncation variants cause a recognizable syndrome with craniofacial and brain abnormalities.</title>
        <authorList>
            <person name="Miyake N."/>
            <person name="Takahashi H."/>
            <person name="Nakamura K."/>
            <person name="Isidor B."/>
            <person name="Hiraki Y."/>
            <person name="Koshimizu E."/>
            <person name="Shiina M."/>
            <person name="Sasaki K."/>
            <person name="Suzuki H."/>
            <person name="Abe R."/>
            <person name="Kimura Y."/>
            <person name="Akiyama T."/>
            <person name="Tomizawa S.I."/>
            <person name="Hirose T."/>
            <person name="Hamanaka K."/>
            <person name="Miyatake S."/>
            <person name="Mitsuhashi S."/>
            <person name="Mizuguchi T."/>
            <person name="Takata A."/>
            <person name="Obo K."/>
            <person name="Kato M."/>
            <person name="Ogata K."/>
            <person name="Matsumoto N."/>
        </authorList>
    </citation>
    <scope>INVOLVEMENT IN CEBALID</scope>
    <scope>SUBCELLULAR LOCATION</scope>
    <scope>VARIANTS CEBALID 1279-GLN--THR-1320 DEL AND 1295-ARG--THR-1320 DEL</scope>
    <scope>CHARACTERIZATION OF VARIANTS CEBALID 1279-GLN--THR-1320 DEL AND 1295-ARG--THR-1320 DEL</scope>
    <scope>TISSUE SPECIFICITY</scope>
    <scope>INTERACTION WITH PBX1; PKNOX1; ZBTB24; E2F7 AND RING1</scope>
</reference>
<reference key="10">
    <citation type="journal article" date="2020" name="Brain">
        <title>MN1 C-terminal truncation syndrome is a novel neurodevelopmental and craniofacial disorder with partial rhombencephalosynapsis.</title>
        <authorList>
            <consortium name="University of Washington Center for Mendelian Genomics"/>
            <person name="Mak C.C.Y."/>
            <person name="Doherty D."/>
            <person name="Lin A.E."/>
            <person name="Vegas N."/>
            <person name="Cho M.T."/>
            <person name="Viot G."/>
            <person name="Dimartino C."/>
            <person name="Weisfeld-Adams J.D."/>
            <person name="Lessel D."/>
            <person name="Joss S."/>
            <person name="Li C."/>
            <person name="Gonzaga-Jauregui C."/>
            <person name="Zarate Y.A."/>
            <person name="Ehmke N."/>
            <person name="Horn D."/>
            <person name="Troyer C."/>
            <person name="Kant S.G."/>
            <person name="Lee Y."/>
            <person name="Ishak G.E."/>
            <person name="Leung G."/>
            <person name="Barone Pritchard A."/>
            <person name="Yang S."/>
            <person name="Bend E.G."/>
            <person name="Filippini F."/>
            <person name="Roadhouse C."/>
            <person name="Lebrun N."/>
            <person name="Mehaffey M.G."/>
            <person name="Martin P.M."/>
            <person name="Apple B."/>
            <person name="Millan F."/>
            <person name="Puk O."/>
            <person name="Hoffer M.J.V."/>
            <person name="Henderson L.B."/>
            <person name="McGowan R."/>
            <person name="Wentzensen I.M."/>
            <person name="Pei S."/>
            <person name="Zahir F.R."/>
            <person name="Yu M."/>
            <person name="Gibson W.T."/>
            <person name="Seman A."/>
            <person name="Steeves M."/>
            <person name="Murrell J.R."/>
            <person name="Luettgen S."/>
            <person name="Francisco E."/>
            <person name="Strom T.M."/>
            <person name="Amlie-Wolf L."/>
            <person name="Kaindl A.M."/>
            <person name="Wilson W.G."/>
            <person name="Halbach S."/>
            <person name="Basel-Salmon L."/>
            <person name="Lev-El N."/>
            <person name="Denecke J."/>
            <person name="Vissers L.E.L.M."/>
            <person name="Radtke K."/>
            <person name="Chelly J."/>
            <person name="Zackai E."/>
            <person name="Friedman J.M."/>
            <person name="Bamshad M.J."/>
            <person name="Nickerson D.A."/>
            <person name="Reid R.R."/>
            <person name="Devriendt K."/>
            <person name="Chae J.H."/>
            <person name="Stolerman E."/>
            <person name="McDougall C."/>
            <person name="Powis Z."/>
            <person name="Bienvenu T."/>
            <person name="Tan T.Y."/>
            <person name="Orenstein N."/>
            <person name="Dobyns W.B."/>
            <person name="Shieh J.T."/>
            <person name="Choi M."/>
            <person name="Waggoner D."/>
            <person name="Gripp K.W."/>
            <person name="Parker M.J."/>
            <person name="Stoler J."/>
            <person name="Lyonnet S."/>
            <person name="Cormier-Daire V."/>
            <person name="Viskochil D."/>
            <person name="Hoffman T.L."/>
            <person name="Amiel J."/>
            <person name="Chung B.H.Y."/>
            <person name="Gordon C.T."/>
        </authorList>
    </citation>
    <scope>INVOLVEMENT IN CEBALID</scope>
    <scope>VARIANTS CEBALID 472-SER--THR-1320 DEL; 1249-GLU--THR-1320 DEL; 1260-GLU--THR-1320 DEL; 1273-GLN--THR-1320 DEL; 1295-ARG--THR-1320 DEL AND 1301-TRP--THR-1320 DEL</scope>
</reference>
<sequence length="1320" mass="136001">MFGLDQFEPQVNSRNAGQGERNFNETGLSMNTHFKAPAFHTGGPPGPVDPAMSALGEPPILGMNMEPYGFHARGHSELHAGGLQAQPVHGFFGGQQPHHGHPGSHHPHQHHPHFGGNFGGPDPGASCLHGGRLLGYGGAAGGLGSQPPFAEGYEHMAESQGPESFGPQRPGNLPDFHSSGASSHAVPAPCLPLDQSPNRAASFHGLPSSSGSDSHSLEPRRVTNQGAVDSLEYNYPGEAPSGHFDMFSPSDSEGQLPHYAAGRQVPGGAFPGASAMPRAAGMVGLSKMHAQPPQQQPQQQQQPQQQQQQHGVFFERFSGARKMPVGLEPSVGSRHPLMQPPQQAPPPPQQQPPQQPPQQQPPPPPGLLVRQNSCPPALPRPQQGEAGTPSGGLQDGGPMLPSQHAQFEYPIHRLENRSMHPYSEPVFSMQHPPPQQAPNQRLQHFDAPPYMNVAKRPRFDFPGSAGVDRCASWNGSMHNGALDNHLSPSAYPGLPGEFTPPVPDSFPSGPPLQHPAPDHQSLQQQQQQQQQQQQQQQQQQQQQQQQQQQQRQNAALMIKQMASRNQQQRLRQPNLAQLGHPGDVGQGGLVHGGPVGGLAQPNFEREGGSTGAGRLGTFEQQAPHLAQESAWFSGPHPPPGDLLPRRMGGSGLPADCGPHDPSLAPPPPPGGSGVLFRGPLQEPMRMPGEGHVPALPSPGLQFGGSLGGLGQLQSPGAGVGLPSAASERRPPPPDFATSALGGQPGFPFGAAGRQSTPHSGPGVNSPPSAGGGGGSSGGGGGGGAYPPQPDFQPSQRTSASKLGALSLGSFNKPSSKDNLFGQSCLAALSTACQNMIASLGAPNLNVTFNKKNPPEGKRKLSQNETDGAAVAGNPGSDYFPGGTAPGAPGPGGPSGTSSSGSKASGPPNPPAQGDGTSLSPNYTLESTSGNDGKPVSGGGGRGRGRRKRDSGHVSPGTFFDKYSAAPDSGGAPGVSPGQQQASGAAVGGSSAGETRGAPTPHEKALTSPSWGKGAELLLGDQPDLIGSLDGGAKSDSSSPNVGEFASDEVSTSYANEDEVSSSSDNPQALVKASRSPLVTGSPKLPPRGVGAGEHGPKAPPPALGLGIMSNSTSTPDSYGGGGGPGHPGTPGLEQVRTPTSSSGAPPPDEIHPLEILQAQIQLQRQQFSISEDQPLGLKGGKKGECAVGASGAQNGDSELGSCCSEAVKSAMSTIDLDSLMAEHSAAWYMPADKALVDSADDDKTLAPWEKAKPQNPNSKEAHDLPANKASASQPGSHLQCLSVHCTDDVGDAKARASVPTWRSLHSDISNRFGTFVAALT</sequence>
<comment type="function">
    <text evidence="1 8">Transcriptional activator which specifically regulates expression of TBX22 in the posterior region of the developing palate. Required during later stages of palate development for growth and medial fusion of the palatal shelves. Promotes maturation and normal function of calvarial osteoblasts, including expression of the osteoclastogenic cytokine TNFSF11/RANKL. Necessary for normal development of the membranous bones of the skull (By similarity). May play a role in tumor suppression (Probable).</text>
</comment>
<comment type="subunit">
    <text evidence="4">Interacts with PBX1, PKNOX1, ZBTB24, E2F7, RING1.</text>
</comment>
<comment type="subcellular location">
    <subcellularLocation>
        <location evidence="4">Nucleus</location>
    </subcellularLocation>
</comment>
<comment type="tissue specificity">
    <text evidence="4">Widely expressed in fetal and adult tissues. Highest expression is observed in fetal brain and skeletal muscle, and adult skeletal muscle.</text>
</comment>
<comment type="disease" evidence="3 4">
    <disease id="DI-05758">
        <name>CEBALID syndrome</name>
        <acronym>CEBALID</acronym>
        <description>An autosomal dominant developmental disorder characterized by global developmental delay, intellectual disability with severe expressive language delay, craniofacial dysmorphism, and structural brain abnormalities. Most patients have an atypical form of rhombencephalosynapsis, a distinctive brain malformation characterized by partial or complete loss of the cerebellar vermis with fusion of the cerebellar hemispheres. Other frequent features include perisylvian polymicrogyria, abnormal posterior clinoid processes, cerebellar hypoplasia or dysplasia, and persistent trigeminal artery.</description>
        <dbReference type="MIM" id="618774"/>
    </disease>
    <text>The disease is caused by variants affecting the gene represented in this entry.</text>
</comment>
<comment type="disease">
    <text evidence="5">A chromosomal aberration involving MN1 may be a cause of acute myeloid leukemia (AML). Translocation t(12;22)(p13;q11) with ETV6.</text>
</comment>
<comment type="disease">
    <text evidence="6">Defects in MN1 involved in the development of meningiomas, slowly growing benign tumors derived from the arachnoidal cap cells of the leptomeninges, the soft coverings of the brain and spinal cord. Meningiomas are believed to be the most common primary tumors of the central nervous system in man.</text>
</comment>
<comment type="online information" name="Atlas of Genetics and Cytogenetics in Oncology and Haematology">
    <link uri="https://atlasgeneticsoncology.org/gene/56/MN1"/>
</comment>
<dbReference type="EMBL" id="X82209">
    <property type="protein sequence ID" value="CAA57693.2"/>
    <property type="molecule type" value="mRNA"/>
</dbReference>
<dbReference type="EMBL" id="AL031591">
    <property type="status" value="NOT_ANNOTATED_CDS"/>
    <property type="molecule type" value="Genomic_DNA"/>
</dbReference>
<dbReference type="EMBL" id="FO393416">
    <property type="status" value="NOT_ANNOTATED_CDS"/>
    <property type="molecule type" value="Genomic_DNA"/>
</dbReference>
<dbReference type="EMBL" id="CH471095">
    <property type="protein sequence ID" value="EAW59741.1"/>
    <property type="molecule type" value="Genomic_DNA"/>
</dbReference>
<dbReference type="EMBL" id="Z70218">
    <property type="protein sequence ID" value="CAA94179.1"/>
    <property type="molecule type" value="mRNA"/>
</dbReference>
<dbReference type="CCDS" id="CCDS42998.1"/>
<dbReference type="RefSeq" id="NP_002421.3">
    <property type="nucleotide sequence ID" value="NM_002430.2"/>
</dbReference>
<dbReference type="BioGRID" id="110473">
    <property type="interactions" value="30"/>
</dbReference>
<dbReference type="FunCoup" id="Q10571">
    <property type="interactions" value="1044"/>
</dbReference>
<dbReference type="IntAct" id="Q10571">
    <property type="interactions" value="6"/>
</dbReference>
<dbReference type="MINT" id="Q10571"/>
<dbReference type="STRING" id="9606.ENSP00000304956"/>
<dbReference type="GlyCosmos" id="Q10571">
    <property type="glycosylation" value="1 site, 1 glycan"/>
</dbReference>
<dbReference type="GlyGen" id="Q10571">
    <property type="glycosylation" value="3 sites, 1 O-linked glycan (2 sites)"/>
</dbReference>
<dbReference type="iPTMnet" id="Q10571"/>
<dbReference type="PhosphoSitePlus" id="Q10571"/>
<dbReference type="BioMuta" id="MN1"/>
<dbReference type="DMDM" id="215274133"/>
<dbReference type="jPOST" id="Q10571"/>
<dbReference type="MassIVE" id="Q10571"/>
<dbReference type="PaxDb" id="9606-ENSP00000304956"/>
<dbReference type="PeptideAtlas" id="Q10571"/>
<dbReference type="ProteomicsDB" id="58861"/>
<dbReference type="Antibodypedia" id="309">
    <property type="antibodies" value="153 antibodies from 28 providers"/>
</dbReference>
<dbReference type="DNASU" id="4330"/>
<dbReference type="Ensembl" id="ENST00000302326.5">
    <property type="protein sequence ID" value="ENSP00000304956.4"/>
    <property type="gene ID" value="ENSG00000169184.7"/>
</dbReference>
<dbReference type="GeneID" id="4330"/>
<dbReference type="KEGG" id="hsa:4330"/>
<dbReference type="MANE-Select" id="ENST00000302326.5">
    <property type="protein sequence ID" value="ENSP00000304956.4"/>
    <property type="RefSeq nucleotide sequence ID" value="NM_002430.3"/>
    <property type="RefSeq protein sequence ID" value="NP_002421.3"/>
</dbReference>
<dbReference type="UCSC" id="uc003adj.3">
    <property type="organism name" value="human"/>
</dbReference>
<dbReference type="AGR" id="HGNC:7180"/>
<dbReference type="CTD" id="4330"/>
<dbReference type="DisGeNET" id="4330"/>
<dbReference type="GeneCards" id="MN1"/>
<dbReference type="GeneReviews" id="MN1"/>
<dbReference type="HGNC" id="HGNC:7180">
    <property type="gene designation" value="MN1"/>
</dbReference>
<dbReference type="HPA" id="ENSG00000169184">
    <property type="expression patterns" value="Tissue enhanced (skeletal)"/>
</dbReference>
<dbReference type="MalaCards" id="MN1"/>
<dbReference type="MIM" id="156100">
    <property type="type" value="gene"/>
</dbReference>
<dbReference type="MIM" id="607174">
    <property type="type" value="phenotype"/>
</dbReference>
<dbReference type="MIM" id="618774">
    <property type="type" value="phenotype"/>
</dbReference>
<dbReference type="neXtProt" id="NX_Q10571"/>
<dbReference type="OpenTargets" id="ENSG00000169184"/>
<dbReference type="Orphanet" id="693549">
    <property type="disease" value="Facial dysmorphism-Intellectual disability-rhombencephalosynapsis syndrome"/>
</dbReference>
<dbReference type="Orphanet" id="263662">
    <property type="disease" value="Familial multiple meningioma"/>
</dbReference>
<dbReference type="PharmGKB" id="PA30893"/>
<dbReference type="VEuPathDB" id="HostDB:ENSG00000169184"/>
<dbReference type="eggNOG" id="ENOG502QVWY">
    <property type="taxonomic scope" value="Eukaryota"/>
</dbReference>
<dbReference type="GeneTree" id="ENSGT00390000001777"/>
<dbReference type="HOGENOM" id="CLU_009075_0_0_1"/>
<dbReference type="InParanoid" id="Q10571"/>
<dbReference type="OMA" id="QESAWFS"/>
<dbReference type="OrthoDB" id="9881263at2759"/>
<dbReference type="PAN-GO" id="Q10571">
    <property type="GO annotations" value="0 GO annotations based on evolutionary models"/>
</dbReference>
<dbReference type="PhylomeDB" id="Q10571"/>
<dbReference type="TreeFam" id="TF331780"/>
<dbReference type="PathwayCommons" id="Q10571"/>
<dbReference type="SignaLink" id="Q10571"/>
<dbReference type="SIGNOR" id="Q10571"/>
<dbReference type="BioGRID-ORCS" id="4330">
    <property type="hits" value="13 hits in 1145 CRISPR screens"/>
</dbReference>
<dbReference type="ChiTaRS" id="MN1">
    <property type="organism name" value="human"/>
</dbReference>
<dbReference type="GeneWiki" id="MN1_(gene)"/>
<dbReference type="GenomeRNAi" id="4330"/>
<dbReference type="Pharos" id="Q10571">
    <property type="development level" value="Tbio"/>
</dbReference>
<dbReference type="PRO" id="PR:Q10571"/>
<dbReference type="Proteomes" id="UP000005640">
    <property type="component" value="Chromosome 22"/>
</dbReference>
<dbReference type="RNAct" id="Q10571">
    <property type="molecule type" value="protein"/>
</dbReference>
<dbReference type="Bgee" id="ENSG00000169184">
    <property type="expression patterns" value="Expressed in ganglionic eminence and 177 other cell types or tissues"/>
</dbReference>
<dbReference type="ExpressionAtlas" id="Q10571">
    <property type="expression patterns" value="baseline and differential"/>
</dbReference>
<dbReference type="GO" id="GO:0005634">
    <property type="term" value="C:nucleus"/>
    <property type="evidence" value="ECO:0000314"/>
    <property type="project" value="UniProtKB"/>
</dbReference>
<dbReference type="GO" id="GO:0001957">
    <property type="term" value="P:intramembranous ossification"/>
    <property type="evidence" value="ECO:0007669"/>
    <property type="project" value="Ensembl"/>
</dbReference>
<dbReference type="GO" id="GO:0033689">
    <property type="term" value="P:negative regulation of osteoblast proliferation"/>
    <property type="evidence" value="ECO:0000314"/>
    <property type="project" value="UniProtKB"/>
</dbReference>
<dbReference type="GO" id="GO:0070564">
    <property type="term" value="P:positive regulation of vitamin D receptor signaling pathway"/>
    <property type="evidence" value="ECO:0000314"/>
    <property type="project" value="UniProtKB"/>
</dbReference>
<dbReference type="GO" id="GO:1902806">
    <property type="term" value="P:regulation of cell cycle G1/S phase transition"/>
    <property type="evidence" value="ECO:0000314"/>
    <property type="project" value="UniProtKB"/>
</dbReference>
<dbReference type="GO" id="GO:0006355">
    <property type="term" value="P:regulation of DNA-templated transcription"/>
    <property type="evidence" value="ECO:0007669"/>
    <property type="project" value="InterPro"/>
</dbReference>
<dbReference type="InterPro" id="IPR037644">
    <property type="entry name" value="MN1"/>
</dbReference>
<dbReference type="PANTHER" id="PTHR15821">
    <property type="entry name" value="PROTEIN MN1"/>
    <property type="match status" value="1"/>
</dbReference>
<dbReference type="PANTHER" id="PTHR15821:SF0">
    <property type="entry name" value="TRANSCRIPTIONAL ACTIVATOR MN1"/>
    <property type="match status" value="1"/>
</dbReference>
<name>MN1_HUMAN</name>